<comment type="catalytic activity">
    <reaction evidence="1">
        <text>tRNA(His) + L-histidine + ATP = L-histidyl-tRNA(His) + AMP + diphosphate + H(+)</text>
        <dbReference type="Rhea" id="RHEA:17313"/>
        <dbReference type="Rhea" id="RHEA-COMP:9665"/>
        <dbReference type="Rhea" id="RHEA-COMP:9689"/>
        <dbReference type="ChEBI" id="CHEBI:15378"/>
        <dbReference type="ChEBI" id="CHEBI:30616"/>
        <dbReference type="ChEBI" id="CHEBI:33019"/>
        <dbReference type="ChEBI" id="CHEBI:57595"/>
        <dbReference type="ChEBI" id="CHEBI:78442"/>
        <dbReference type="ChEBI" id="CHEBI:78527"/>
        <dbReference type="ChEBI" id="CHEBI:456215"/>
        <dbReference type="EC" id="6.1.1.21"/>
    </reaction>
</comment>
<comment type="subunit">
    <text evidence="1">Homodimer.</text>
</comment>
<comment type="subcellular location">
    <subcellularLocation>
        <location evidence="1">Cytoplasm</location>
    </subcellularLocation>
</comment>
<comment type="similarity">
    <text evidence="1">Belongs to the class-II aminoacyl-tRNA synthetase family.</text>
</comment>
<protein>
    <recommendedName>
        <fullName evidence="1">Histidine--tRNA ligase</fullName>
        <ecNumber evidence="1">6.1.1.21</ecNumber>
    </recommendedName>
    <alternativeName>
        <fullName evidence="1">Histidyl-tRNA synthetase</fullName>
        <shortName evidence="1">HisRS</shortName>
    </alternativeName>
</protein>
<dbReference type="EC" id="6.1.1.21" evidence="1"/>
<dbReference type="EMBL" id="CU207366">
    <property type="protein sequence ID" value="CAL66087.1"/>
    <property type="molecule type" value="Genomic_DNA"/>
</dbReference>
<dbReference type="RefSeq" id="WP_011709006.1">
    <property type="nucleotide sequence ID" value="NC_008571.1"/>
</dbReference>
<dbReference type="SMR" id="A0M0E2"/>
<dbReference type="STRING" id="411154.GFO_1113"/>
<dbReference type="KEGG" id="gfo:GFO_1113"/>
<dbReference type="eggNOG" id="COG0124">
    <property type="taxonomic scope" value="Bacteria"/>
</dbReference>
<dbReference type="HOGENOM" id="CLU_025113_3_0_10"/>
<dbReference type="OrthoDB" id="9800814at2"/>
<dbReference type="Proteomes" id="UP000000755">
    <property type="component" value="Chromosome"/>
</dbReference>
<dbReference type="GO" id="GO:0005737">
    <property type="term" value="C:cytoplasm"/>
    <property type="evidence" value="ECO:0007669"/>
    <property type="project" value="UniProtKB-SubCell"/>
</dbReference>
<dbReference type="GO" id="GO:0005524">
    <property type="term" value="F:ATP binding"/>
    <property type="evidence" value="ECO:0007669"/>
    <property type="project" value="UniProtKB-UniRule"/>
</dbReference>
<dbReference type="GO" id="GO:0004821">
    <property type="term" value="F:histidine-tRNA ligase activity"/>
    <property type="evidence" value="ECO:0007669"/>
    <property type="project" value="UniProtKB-UniRule"/>
</dbReference>
<dbReference type="GO" id="GO:0006427">
    <property type="term" value="P:histidyl-tRNA aminoacylation"/>
    <property type="evidence" value="ECO:0007669"/>
    <property type="project" value="UniProtKB-UniRule"/>
</dbReference>
<dbReference type="CDD" id="cd00773">
    <property type="entry name" value="HisRS-like_core"/>
    <property type="match status" value="1"/>
</dbReference>
<dbReference type="CDD" id="cd00859">
    <property type="entry name" value="HisRS_anticodon"/>
    <property type="match status" value="1"/>
</dbReference>
<dbReference type="FunFam" id="3.30.930.10:FF:000093">
    <property type="entry name" value="Histidine--tRNA ligase"/>
    <property type="match status" value="1"/>
</dbReference>
<dbReference type="Gene3D" id="3.40.50.800">
    <property type="entry name" value="Anticodon-binding domain"/>
    <property type="match status" value="1"/>
</dbReference>
<dbReference type="Gene3D" id="3.30.930.10">
    <property type="entry name" value="Bira Bifunctional Protein, Domain 2"/>
    <property type="match status" value="1"/>
</dbReference>
<dbReference type="HAMAP" id="MF_00127">
    <property type="entry name" value="His_tRNA_synth"/>
    <property type="match status" value="1"/>
</dbReference>
<dbReference type="InterPro" id="IPR006195">
    <property type="entry name" value="aa-tRNA-synth_II"/>
</dbReference>
<dbReference type="InterPro" id="IPR045864">
    <property type="entry name" value="aa-tRNA-synth_II/BPL/LPL"/>
</dbReference>
<dbReference type="InterPro" id="IPR004154">
    <property type="entry name" value="Anticodon-bd"/>
</dbReference>
<dbReference type="InterPro" id="IPR036621">
    <property type="entry name" value="Anticodon-bd_dom_sf"/>
</dbReference>
<dbReference type="InterPro" id="IPR015807">
    <property type="entry name" value="His-tRNA-ligase"/>
</dbReference>
<dbReference type="InterPro" id="IPR041715">
    <property type="entry name" value="HisRS-like_core"/>
</dbReference>
<dbReference type="InterPro" id="IPR004516">
    <property type="entry name" value="HisRS/HisZ"/>
</dbReference>
<dbReference type="InterPro" id="IPR033656">
    <property type="entry name" value="HisRS_anticodon"/>
</dbReference>
<dbReference type="NCBIfam" id="TIGR00442">
    <property type="entry name" value="hisS"/>
    <property type="match status" value="1"/>
</dbReference>
<dbReference type="PANTHER" id="PTHR11476:SF7">
    <property type="entry name" value="HISTIDINE--TRNA LIGASE"/>
    <property type="match status" value="1"/>
</dbReference>
<dbReference type="PANTHER" id="PTHR11476">
    <property type="entry name" value="HISTIDYL-TRNA SYNTHETASE"/>
    <property type="match status" value="1"/>
</dbReference>
<dbReference type="Pfam" id="PF03129">
    <property type="entry name" value="HGTP_anticodon"/>
    <property type="match status" value="1"/>
</dbReference>
<dbReference type="Pfam" id="PF13393">
    <property type="entry name" value="tRNA-synt_His"/>
    <property type="match status" value="1"/>
</dbReference>
<dbReference type="PIRSF" id="PIRSF001549">
    <property type="entry name" value="His-tRNA_synth"/>
    <property type="match status" value="1"/>
</dbReference>
<dbReference type="SUPFAM" id="SSF52954">
    <property type="entry name" value="Class II aaRS ABD-related"/>
    <property type="match status" value="1"/>
</dbReference>
<dbReference type="SUPFAM" id="SSF55681">
    <property type="entry name" value="Class II aaRS and biotin synthetases"/>
    <property type="match status" value="1"/>
</dbReference>
<dbReference type="PROSITE" id="PS50862">
    <property type="entry name" value="AA_TRNA_LIGASE_II"/>
    <property type="match status" value="1"/>
</dbReference>
<reference key="1">
    <citation type="journal article" date="2006" name="Environ. Microbiol.">
        <title>Whole genome analysis of the marine Bacteroidetes'Gramella forsetii' reveals adaptations to degradation of polymeric organic matter.</title>
        <authorList>
            <person name="Bauer M."/>
            <person name="Kube M."/>
            <person name="Teeling H."/>
            <person name="Richter M."/>
            <person name="Lombardot T."/>
            <person name="Allers E."/>
            <person name="Wuerdemann C.A."/>
            <person name="Quast C."/>
            <person name="Kuhl H."/>
            <person name="Knaust F."/>
            <person name="Woebken D."/>
            <person name="Bischof K."/>
            <person name="Mussmann M."/>
            <person name="Choudhuri J.V."/>
            <person name="Meyer F."/>
            <person name="Reinhardt R."/>
            <person name="Amann R.I."/>
            <person name="Gloeckner F.O."/>
        </authorList>
    </citation>
    <scope>NUCLEOTIDE SEQUENCE [LARGE SCALE GENOMIC DNA]</scope>
    <source>
        <strain>DSM 17595 / CGMCC 1.15422 / KT0803</strain>
    </source>
</reference>
<accession>A0M0E2</accession>
<sequence>MAQKPSIPKGTRDFSPEEVAKRNYIFNTIQTEFKGFGFQPIETPSFENSSTLMGKYGDEGDRLIFKILNSGDFLKKADKDALANSDSLKLTSSISEKALRYDLTVPFARYVVQHQNEIEFPFKRYQIQPVWRADRPQKGRFREFFQCDADVVGSNSLWQEVEFVQLYDAVFNKLGLEGVTIKINNRKVLSGFAEVIGEQDKLIDFTVALDKLDKIGEEGVKKEMREKGISEEALNKIQPIFNLNGNFAEKIEGLKTILEGSETGQKGIEELQFIQNAIEEMPLSVAKLDLDVTLARGLNYYTGAIFEVAAPENVKMGSIGGGGRYDDLTGIFGLKDMSGIGISFGLDRIYLVLEELGLFPATVTENTKVLFINFGEKEALYAMKAVKRLREENIIAELYPDSAKMGKQMKYADKRSIPYVVLAGEEEINDKKFTLKHMKSGEQSNLDFNGLSGALK</sequence>
<keyword id="KW-0030">Aminoacyl-tRNA synthetase</keyword>
<keyword id="KW-0067">ATP-binding</keyword>
<keyword id="KW-0963">Cytoplasm</keyword>
<keyword id="KW-0436">Ligase</keyword>
<keyword id="KW-0547">Nucleotide-binding</keyword>
<keyword id="KW-0648">Protein biosynthesis</keyword>
<name>SYH_CHRFK</name>
<organism>
    <name type="scientific">Christiangramia forsetii (strain DSM 17595 / CGMCC 1.15422 / KT0803)</name>
    <name type="common">Gramella forsetii</name>
    <dbReference type="NCBI Taxonomy" id="411154"/>
    <lineage>
        <taxon>Bacteria</taxon>
        <taxon>Pseudomonadati</taxon>
        <taxon>Bacteroidota</taxon>
        <taxon>Flavobacteriia</taxon>
        <taxon>Flavobacteriales</taxon>
        <taxon>Flavobacteriaceae</taxon>
        <taxon>Christiangramia</taxon>
    </lineage>
</organism>
<gene>
    <name evidence="1" type="primary">hisS</name>
    <name type="ordered locus">GFO_1113</name>
</gene>
<proteinExistence type="inferred from homology"/>
<evidence type="ECO:0000255" key="1">
    <source>
        <dbReference type="HAMAP-Rule" id="MF_00127"/>
    </source>
</evidence>
<feature type="chain" id="PRO_1000057829" description="Histidine--tRNA ligase">
    <location>
        <begin position="1"/>
        <end position="456"/>
    </location>
</feature>